<gene>
    <name type="primary">yveK</name>
    <name type="ordered locus">BSU34370</name>
</gene>
<feature type="chain" id="PRO_0000217232" description="Uncharacterized protein YveK">
    <location>
        <begin position="1"/>
        <end position="234"/>
    </location>
</feature>
<feature type="transmembrane region" description="Helical" evidence="1">
    <location>
        <begin position="20"/>
        <end position="40"/>
    </location>
</feature>
<feature type="transmembrane region" description="Helical" evidence="1">
    <location>
        <begin position="176"/>
        <end position="196"/>
    </location>
</feature>
<accession>P71050</accession>
<accession>O08169</accession>
<proteinExistence type="inferred from homology"/>
<keyword id="KW-1003">Cell membrane</keyword>
<keyword id="KW-0472">Membrane</keyword>
<keyword id="KW-1185">Reference proteome</keyword>
<keyword id="KW-0812">Transmembrane</keyword>
<keyword id="KW-1133">Transmembrane helix</keyword>
<evidence type="ECO:0000255" key="1"/>
<evidence type="ECO:0000305" key="2"/>
<protein>
    <recommendedName>
        <fullName>Uncharacterized protein YveK</fullName>
    </recommendedName>
</protein>
<name>YVEK_BACSU</name>
<comment type="subcellular location">
    <subcellularLocation>
        <location evidence="2">Cell membrane</location>
        <topology evidence="2">Multi-pass membrane protein</topology>
    </subcellularLocation>
</comment>
<comment type="similarity">
    <text evidence="2">Belongs to the CpsC/CapA family.</text>
</comment>
<reference key="1">
    <citation type="journal article" date="1996" name="Microbiology">
        <title>Integrated mapping and sequencing of a 115 kb DNA fragment from Bacillus subtilis: sequence analysis of a 21 kb segment containing the sigL locus.</title>
        <authorList>
            <person name="Fabret C."/>
            <person name="Quentin Y."/>
            <person name="Chapal N."/>
            <person name="Guiseppi A."/>
            <person name="Haiech J."/>
            <person name="Denizot F."/>
        </authorList>
    </citation>
    <scope>NUCLEOTIDE SEQUENCE [GENOMIC DNA]</scope>
    <source>
        <strain>168</strain>
    </source>
</reference>
<reference key="2">
    <citation type="submission" date="1997-04" db="EMBL/GenBank/DDBJ databases">
        <authorList>
            <person name="Denizot F."/>
        </authorList>
    </citation>
    <scope>NUCLEOTIDE SEQUENCE [GENOMIC DNA]</scope>
    <source>
        <strain>168</strain>
    </source>
</reference>
<reference key="3">
    <citation type="journal article" date="1997" name="Nature">
        <title>The complete genome sequence of the Gram-positive bacterium Bacillus subtilis.</title>
        <authorList>
            <person name="Kunst F."/>
            <person name="Ogasawara N."/>
            <person name="Moszer I."/>
            <person name="Albertini A.M."/>
            <person name="Alloni G."/>
            <person name="Azevedo V."/>
            <person name="Bertero M.G."/>
            <person name="Bessieres P."/>
            <person name="Bolotin A."/>
            <person name="Borchert S."/>
            <person name="Borriss R."/>
            <person name="Boursier L."/>
            <person name="Brans A."/>
            <person name="Braun M."/>
            <person name="Brignell S.C."/>
            <person name="Bron S."/>
            <person name="Brouillet S."/>
            <person name="Bruschi C.V."/>
            <person name="Caldwell B."/>
            <person name="Capuano V."/>
            <person name="Carter N.M."/>
            <person name="Choi S.-K."/>
            <person name="Codani J.-J."/>
            <person name="Connerton I.F."/>
            <person name="Cummings N.J."/>
            <person name="Daniel R.A."/>
            <person name="Denizot F."/>
            <person name="Devine K.M."/>
            <person name="Duesterhoeft A."/>
            <person name="Ehrlich S.D."/>
            <person name="Emmerson P.T."/>
            <person name="Entian K.-D."/>
            <person name="Errington J."/>
            <person name="Fabret C."/>
            <person name="Ferrari E."/>
            <person name="Foulger D."/>
            <person name="Fritz C."/>
            <person name="Fujita M."/>
            <person name="Fujita Y."/>
            <person name="Fuma S."/>
            <person name="Galizzi A."/>
            <person name="Galleron N."/>
            <person name="Ghim S.-Y."/>
            <person name="Glaser P."/>
            <person name="Goffeau A."/>
            <person name="Golightly E.J."/>
            <person name="Grandi G."/>
            <person name="Guiseppi G."/>
            <person name="Guy B.J."/>
            <person name="Haga K."/>
            <person name="Haiech J."/>
            <person name="Harwood C.R."/>
            <person name="Henaut A."/>
            <person name="Hilbert H."/>
            <person name="Holsappel S."/>
            <person name="Hosono S."/>
            <person name="Hullo M.-F."/>
            <person name="Itaya M."/>
            <person name="Jones L.-M."/>
            <person name="Joris B."/>
            <person name="Karamata D."/>
            <person name="Kasahara Y."/>
            <person name="Klaerr-Blanchard M."/>
            <person name="Klein C."/>
            <person name="Kobayashi Y."/>
            <person name="Koetter P."/>
            <person name="Koningstein G."/>
            <person name="Krogh S."/>
            <person name="Kumano M."/>
            <person name="Kurita K."/>
            <person name="Lapidus A."/>
            <person name="Lardinois S."/>
            <person name="Lauber J."/>
            <person name="Lazarevic V."/>
            <person name="Lee S.-M."/>
            <person name="Levine A."/>
            <person name="Liu H."/>
            <person name="Masuda S."/>
            <person name="Mauel C."/>
            <person name="Medigue C."/>
            <person name="Medina N."/>
            <person name="Mellado R.P."/>
            <person name="Mizuno M."/>
            <person name="Moestl D."/>
            <person name="Nakai S."/>
            <person name="Noback M."/>
            <person name="Noone D."/>
            <person name="O'Reilly M."/>
            <person name="Ogawa K."/>
            <person name="Ogiwara A."/>
            <person name="Oudega B."/>
            <person name="Park S.-H."/>
            <person name="Parro V."/>
            <person name="Pohl T.M."/>
            <person name="Portetelle D."/>
            <person name="Porwollik S."/>
            <person name="Prescott A.M."/>
            <person name="Presecan E."/>
            <person name="Pujic P."/>
            <person name="Purnelle B."/>
            <person name="Rapoport G."/>
            <person name="Rey M."/>
            <person name="Reynolds S."/>
            <person name="Rieger M."/>
            <person name="Rivolta C."/>
            <person name="Rocha E."/>
            <person name="Roche B."/>
            <person name="Rose M."/>
            <person name="Sadaie Y."/>
            <person name="Sato T."/>
            <person name="Scanlan E."/>
            <person name="Schleich S."/>
            <person name="Schroeter R."/>
            <person name="Scoffone F."/>
            <person name="Sekiguchi J."/>
            <person name="Sekowska A."/>
            <person name="Seror S.J."/>
            <person name="Serror P."/>
            <person name="Shin B.-S."/>
            <person name="Soldo B."/>
            <person name="Sorokin A."/>
            <person name="Tacconi E."/>
            <person name="Takagi T."/>
            <person name="Takahashi H."/>
            <person name="Takemaru K."/>
            <person name="Takeuchi M."/>
            <person name="Tamakoshi A."/>
            <person name="Tanaka T."/>
            <person name="Terpstra P."/>
            <person name="Tognoni A."/>
            <person name="Tosato V."/>
            <person name="Uchiyama S."/>
            <person name="Vandenbol M."/>
            <person name="Vannier F."/>
            <person name="Vassarotti A."/>
            <person name="Viari A."/>
            <person name="Wambutt R."/>
            <person name="Wedler E."/>
            <person name="Wedler H."/>
            <person name="Weitzenegger T."/>
            <person name="Winters P."/>
            <person name="Wipat A."/>
            <person name="Yamamoto H."/>
            <person name="Yamane K."/>
            <person name="Yasumoto K."/>
            <person name="Yata K."/>
            <person name="Yoshida K."/>
            <person name="Yoshikawa H.-F."/>
            <person name="Zumstein E."/>
            <person name="Yoshikawa H."/>
            <person name="Danchin A."/>
        </authorList>
    </citation>
    <scope>NUCLEOTIDE SEQUENCE [LARGE SCALE GENOMIC DNA]</scope>
    <source>
        <strain>168</strain>
    </source>
</reference>
<dbReference type="EMBL" id="Z71928">
    <property type="protein sequence ID" value="CAA96489.1"/>
    <property type="molecule type" value="Genomic_DNA"/>
</dbReference>
<dbReference type="EMBL" id="Z94043">
    <property type="protein sequence ID" value="CAB08023.1"/>
    <property type="molecule type" value="Genomic_DNA"/>
</dbReference>
<dbReference type="EMBL" id="AL009126">
    <property type="protein sequence ID" value="CAB15442.1"/>
    <property type="molecule type" value="Genomic_DNA"/>
</dbReference>
<dbReference type="PIR" id="H70035">
    <property type="entry name" value="H70035"/>
</dbReference>
<dbReference type="RefSeq" id="WP_003228247.1">
    <property type="nucleotide sequence ID" value="NZ_OZ025638.1"/>
</dbReference>
<dbReference type="FunCoup" id="P71050">
    <property type="interactions" value="21"/>
</dbReference>
<dbReference type="IntAct" id="P71050">
    <property type="interactions" value="4"/>
</dbReference>
<dbReference type="STRING" id="224308.BSU34370"/>
<dbReference type="PaxDb" id="224308-BSU34370"/>
<dbReference type="EnsemblBacteria" id="CAB15442">
    <property type="protein sequence ID" value="CAB15442"/>
    <property type="gene ID" value="BSU_34370"/>
</dbReference>
<dbReference type="GeneID" id="938582"/>
<dbReference type="KEGG" id="bsu:BSU34370"/>
<dbReference type="PATRIC" id="fig|224308.179.peg.3723"/>
<dbReference type="eggNOG" id="COG3944">
    <property type="taxonomic scope" value="Bacteria"/>
</dbReference>
<dbReference type="InParanoid" id="P71050"/>
<dbReference type="OrthoDB" id="2360475at2"/>
<dbReference type="PhylomeDB" id="P71050"/>
<dbReference type="BioCyc" id="BSUB:BSU34370-MONOMER"/>
<dbReference type="Proteomes" id="UP000001570">
    <property type="component" value="Chromosome"/>
</dbReference>
<dbReference type="GO" id="GO:0005886">
    <property type="term" value="C:plasma membrane"/>
    <property type="evidence" value="ECO:0000318"/>
    <property type="project" value="GO_Central"/>
</dbReference>
<dbReference type="GO" id="GO:0004713">
    <property type="term" value="F:protein tyrosine kinase activity"/>
    <property type="evidence" value="ECO:0000318"/>
    <property type="project" value="GO_Central"/>
</dbReference>
<dbReference type="InterPro" id="IPR050445">
    <property type="entry name" value="Bact_polysacc_biosynth/exp"/>
</dbReference>
<dbReference type="InterPro" id="IPR003856">
    <property type="entry name" value="LPS_length_determ_N_term"/>
</dbReference>
<dbReference type="PANTHER" id="PTHR32309:SF13">
    <property type="entry name" value="FERRIC ENTEROBACTIN TRANSPORT PROTEIN FEPE"/>
    <property type="match status" value="1"/>
</dbReference>
<dbReference type="PANTHER" id="PTHR32309">
    <property type="entry name" value="TYROSINE-PROTEIN KINASE"/>
    <property type="match status" value="1"/>
</dbReference>
<dbReference type="Pfam" id="PF02706">
    <property type="entry name" value="Wzz"/>
    <property type="match status" value="1"/>
</dbReference>
<organism>
    <name type="scientific">Bacillus subtilis (strain 168)</name>
    <dbReference type="NCBI Taxonomy" id="224308"/>
    <lineage>
        <taxon>Bacteria</taxon>
        <taxon>Bacillati</taxon>
        <taxon>Bacillota</taxon>
        <taxon>Bacilli</taxon>
        <taxon>Bacillales</taxon>
        <taxon>Bacillaceae</taxon>
        <taxon>Bacillus</taxon>
    </lineage>
</organism>
<sequence>MNENMSFKELYAIVRHRFVLILLITIGVTLIMGFVQFKVISPTYQASTQVLVHESDGEENSNLSDIQRNLQYSSTFQSIMKSTALMEEVKAELHLSESASSLKGKVVTSSENESEIINVAVQDHDPAKAAEIANTLVNKFEKEVDERMNVQGVHILSEAKASESPMIKPARLRNMVMAFGAAVMGGITLAFFLHFLDDTCKSARQLSERTGLPCLGSVPDVHKGRNRGIKHFGE</sequence>